<reference key="1">
    <citation type="journal article" date="1995" name="Yeast">
        <title>The sequence of a 44 420 bp fragment located on the left arm of chromosome XIV from Saccharomyces cerevisiae.</title>
        <authorList>
            <person name="Bergez P."/>
            <person name="Doignon F."/>
            <person name="Crouzet M."/>
        </authorList>
    </citation>
    <scope>NUCLEOTIDE SEQUENCE [GENOMIC DNA]</scope>
    <source>
        <strain>S288c / FY1676</strain>
    </source>
</reference>
<reference key="2">
    <citation type="journal article" date="1996" name="Yeast">
        <authorList>
            <person name="Bergez P."/>
            <person name="Doignon F."/>
            <person name="Crouzet M."/>
        </authorList>
    </citation>
    <scope>ERRATUM OF PUBMED:8533472</scope>
</reference>
<reference key="3">
    <citation type="journal article" date="1997" name="Nature">
        <title>The nucleotide sequence of Saccharomyces cerevisiae chromosome XIV and its evolutionary implications.</title>
        <authorList>
            <person name="Philippsen P."/>
            <person name="Kleine K."/>
            <person name="Poehlmann R."/>
            <person name="Duesterhoeft A."/>
            <person name="Hamberg K."/>
            <person name="Hegemann J.H."/>
            <person name="Obermaier B."/>
            <person name="Urrestarazu L.A."/>
            <person name="Aert R."/>
            <person name="Albermann K."/>
            <person name="Altmann R."/>
            <person name="Andre B."/>
            <person name="Baladron V."/>
            <person name="Ballesta J.P.G."/>
            <person name="Becam A.-M."/>
            <person name="Beinhauer J.D."/>
            <person name="Boskovic J."/>
            <person name="Buitrago M.J."/>
            <person name="Bussereau F."/>
            <person name="Coster F."/>
            <person name="Crouzet M."/>
            <person name="D'Angelo M."/>
            <person name="Dal Pero F."/>
            <person name="De Antoni A."/>
            <person name="del Rey F."/>
            <person name="Doignon F."/>
            <person name="Domdey H."/>
            <person name="Dubois E."/>
            <person name="Fiedler T.A."/>
            <person name="Fleig U."/>
            <person name="Floeth M."/>
            <person name="Fritz C."/>
            <person name="Gaillardin C."/>
            <person name="Garcia-Cantalejo J.M."/>
            <person name="Glansdorff N."/>
            <person name="Goffeau A."/>
            <person name="Gueldener U."/>
            <person name="Herbert C.J."/>
            <person name="Heumann K."/>
            <person name="Heuss-Neitzel D."/>
            <person name="Hilbert H."/>
            <person name="Hinni K."/>
            <person name="Iraqui Houssaini I."/>
            <person name="Jacquet M."/>
            <person name="Jimenez A."/>
            <person name="Jonniaux J.-L."/>
            <person name="Karpfinger-Hartl L."/>
            <person name="Lanfranchi G."/>
            <person name="Lepingle A."/>
            <person name="Levesque H."/>
            <person name="Lyck R."/>
            <person name="Maftahi M."/>
            <person name="Mallet L."/>
            <person name="Maurer C.T.C."/>
            <person name="Messenguy F."/>
            <person name="Mewes H.-W."/>
            <person name="Moestl D."/>
            <person name="Nasr F."/>
            <person name="Nicaud J.-M."/>
            <person name="Niedenthal R.K."/>
            <person name="Pandolfo D."/>
            <person name="Pierard A."/>
            <person name="Piravandi E."/>
            <person name="Planta R.J."/>
            <person name="Pohl T.M."/>
            <person name="Purnelle B."/>
            <person name="Rebischung C."/>
            <person name="Remacha M.A."/>
            <person name="Revuelta J.L."/>
            <person name="Rinke M."/>
            <person name="Saiz J.E."/>
            <person name="Sartorello F."/>
            <person name="Scherens B."/>
            <person name="Sen-Gupta M."/>
            <person name="Soler-Mira A."/>
            <person name="Urbanus J.H.M."/>
            <person name="Valle G."/>
            <person name="Van Dyck L."/>
            <person name="Verhasselt P."/>
            <person name="Vierendeels F."/>
            <person name="Vissers S."/>
            <person name="Voet M."/>
            <person name="Volckaert G."/>
            <person name="Wach A."/>
            <person name="Wambutt R."/>
            <person name="Wedler H."/>
            <person name="Zollner A."/>
            <person name="Hani J."/>
        </authorList>
    </citation>
    <scope>NUCLEOTIDE SEQUENCE [LARGE SCALE GENOMIC DNA]</scope>
    <source>
        <strain>ATCC 204508 / S288c</strain>
    </source>
</reference>
<reference key="4">
    <citation type="journal article" date="2014" name="G3 (Bethesda)">
        <title>The reference genome sequence of Saccharomyces cerevisiae: Then and now.</title>
        <authorList>
            <person name="Engel S.R."/>
            <person name="Dietrich F.S."/>
            <person name="Fisk D.G."/>
            <person name="Binkley G."/>
            <person name="Balakrishnan R."/>
            <person name="Costanzo M.C."/>
            <person name="Dwight S.S."/>
            <person name="Hitz B.C."/>
            <person name="Karra K."/>
            <person name="Nash R.S."/>
            <person name="Weng S."/>
            <person name="Wong E.D."/>
            <person name="Lloyd P."/>
            <person name="Skrzypek M.S."/>
            <person name="Miyasato S.R."/>
            <person name="Simison M."/>
            <person name="Cherry J.M."/>
        </authorList>
    </citation>
    <scope>GENOME REANNOTATION</scope>
    <source>
        <strain>ATCC 204508 / S288c</strain>
    </source>
</reference>
<reference key="5">
    <citation type="journal article" date="2007" name="Genome Res.">
        <title>Approaching a complete repository of sequence-verified protein-encoding clones for Saccharomyces cerevisiae.</title>
        <authorList>
            <person name="Hu Y."/>
            <person name="Rolfs A."/>
            <person name="Bhullar B."/>
            <person name="Murthy T.V.S."/>
            <person name="Zhu C."/>
            <person name="Berger M.F."/>
            <person name="Camargo A.A."/>
            <person name="Kelley F."/>
            <person name="McCarron S."/>
            <person name="Jepson D."/>
            <person name="Richardson A."/>
            <person name="Raphael J."/>
            <person name="Moreira D."/>
            <person name="Taycher E."/>
            <person name="Zuo D."/>
            <person name="Mohr S."/>
            <person name="Kane M.F."/>
            <person name="Williamson J."/>
            <person name="Simpson A.J.G."/>
            <person name="Bulyk M.L."/>
            <person name="Harlow E."/>
            <person name="Marsischky G."/>
            <person name="Kolodner R.D."/>
            <person name="LaBaer J."/>
        </authorList>
    </citation>
    <scope>NUCLEOTIDE SEQUENCE [GENOMIC DNA]</scope>
    <source>
        <strain>ATCC 204508 / S288c</strain>
    </source>
</reference>
<reference key="6">
    <citation type="journal article" date="2003" name="Nature">
        <title>Global analysis of protein localization in budding yeast.</title>
        <authorList>
            <person name="Huh W.-K."/>
            <person name="Falvo J.V."/>
            <person name="Gerke L.C."/>
            <person name="Carroll A.S."/>
            <person name="Howson R.W."/>
            <person name="Weissman J.S."/>
            <person name="O'Shea E.K."/>
        </authorList>
    </citation>
    <scope>SUBCELLULAR LOCATION [LARGE SCALE ANALYSIS]</scope>
</reference>
<reference key="7">
    <citation type="journal article" date="2003" name="Nature">
        <title>Global analysis of protein expression in yeast.</title>
        <authorList>
            <person name="Ghaemmaghami S."/>
            <person name="Huh W.-K."/>
            <person name="Bower K."/>
            <person name="Howson R.W."/>
            <person name="Belle A."/>
            <person name="Dephoure N."/>
            <person name="O'Shea E.K."/>
            <person name="Weissman J.S."/>
        </authorList>
    </citation>
    <scope>LEVEL OF PROTEIN EXPRESSION [LARGE SCALE ANALYSIS]</scope>
</reference>
<reference key="8">
    <citation type="journal article" date="2006" name="J. Biol. Chem.">
        <title>The yeast translation release factors Mrf1p and Sup45p (eRF1) are methylated, respectively, by the methyltransferases Mtq1p and Mtq2p.</title>
        <authorList>
            <person name="Polevoda B."/>
            <person name="Span L."/>
            <person name="Sherman F."/>
        </authorList>
    </citation>
    <scope>FUNCTION</scope>
    <scope>CATALYTIC ACTIVITY</scope>
    <scope>SUBCELLULAR LOCATION</scope>
</reference>
<gene>
    <name type="primary">MTQ1</name>
    <name type="ordered locus">YNL063W</name>
    <name type="ORF">N2420</name>
    <name type="ORF">YNL2420W</name>
</gene>
<name>MTQ1_YEAST</name>
<comment type="function">
    <text evidence="4">Methylates MRF1 on 'Gln-287' using S-adenosyl L-methionine as methyl donor.</text>
</comment>
<comment type="catalytic activity">
    <reaction evidence="4">
        <text>L-glutaminyl-[peptide chain release factor] + S-adenosyl-L-methionine = N(5)-methyl-L-glutaminyl-[peptide chain release factor] + S-adenosyl-L-homocysteine + H(+)</text>
        <dbReference type="Rhea" id="RHEA:42896"/>
        <dbReference type="Rhea" id="RHEA-COMP:10271"/>
        <dbReference type="Rhea" id="RHEA-COMP:10272"/>
        <dbReference type="ChEBI" id="CHEBI:15378"/>
        <dbReference type="ChEBI" id="CHEBI:30011"/>
        <dbReference type="ChEBI" id="CHEBI:57856"/>
        <dbReference type="ChEBI" id="CHEBI:59789"/>
        <dbReference type="ChEBI" id="CHEBI:61891"/>
        <dbReference type="EC" id="2.1.1.297"/>
    </reaction>
</comment>
<comment type="interaction">
    <interactant intactId="EBI-28737">
        <id>P53944</id>
    </interactant>
    <interactant intactId="EBI-14964">
        <id>P30775</id>
        <label>MRF1</label>
    </interactant>
    <organismsDiffer>false</organismsDiffer>
    <experiments>2</experiments>
</comment>
<comment type="subcellular location">
    <subcellularLocation>
        <location evidence="2 4">Mitochondrion</location>
    </subcellularLocation>
</comment>
<comment type="miscellaneous">
    <text evidence="3">Present with 13200 molecules/cell in log phase SD medium.</text>
</comment>
<comment type="similarity">
    <text evidence="5">Belongs to the protein N5-glutamine methyltransferase family.</text>
</comment>
<keyword id="KW-0489">Methyltransferase</keyword>
<keyword id="KW-0496">Mitochondrion</keyword>
<keyword id="KW-1185">Reference proteome</keyword>
<keyword id="KW-0949">S-adenosyl-L-methionine</keyword>
<keyword id="KW-0808">Transferase</keyword>
<organism>
    <name type="scientific">Saccharomyces cerevisiae (strain ATCC 204508 / S288c)</name>
    <name type="common">Baker's yeast</name>
    <dbReference type="NCBI Taxonomy" id="559292"/>
    <lineage>
        <taxon>Eukaryota</taxon>
        <taxon>Fungi</taxon>
        <taxon>Dikarya</taxon>
        <taxon>Ascomycota</taxon>
        <taxon>Saccharomycotina</taxon>
        <taxon>Saccharomycetes</taxon>
        <taxon>Saccharomycetales</taxon>
        <taxon>Saccharomycetaceae</taxon>
        <taxon>Saccharomyces</taxon>
    </lineage>
</organism>
<proteinExistence type="evidence at protein level"/>
<protein>
    <recommendedName>
        <fullName>Mitochondrial MRF1 N(5)-glutamine methyltransferase MTQ1</fullName>
        <ecNumber evidence="4">2.1.1.297</ecNumber>
    </recommendedName>
</protein>
<evidence type="ECO:0000250" key="1"/>
<evidence type="ECO:0000269" key="2">
    <source>
    </source>
</evidence>
<evidence type="ECO:0000269" key="3">
    <source>
    </source>
</evidence>
<evidence type="ECO:0000269" key="4">
    <source>
    </source>
</evidence>
<evidence type="ECO:0000305" key="5"/>
<dbReference type="EC" id="2.1.1.297" evidence="4"/>
<dbReference type="EMBL" id="U12141">
    <property type="protein sequence ID" value="AAA99648.1"/>
    <property type="molecule type" value="Genomic_DNA"/>
</dbReference>
<dbReference type="EMBL" id="Z71339">
    <property type="protein sequence ID" value="CAA95936.1"/>
    <property type="molecule type" value="Genomic_DNA"/>
</dbReference>
<dbReference type="EMBL" id="AY692585">
    <property type="protein sequence ID" value="AAT92604.1"/>
    <property type="molecule type" value="Genomic_DNA"/>
</dbReference>
<dbReference type="EMBL" id="BK006947">
    <property type="protein sequence ID" value="DAA10483.1"/>
    <property type="molecule type" value="Genomic_DNA"/>
</dbReference>
<dbReference type="PIR" id="S58715">
    <property type="entry name" value="S58715"/>
</dbReference>
<dbReference type="RefSeq" id="NP_014336.1">
    <property type="nucleotide sequence ID" value="NM_001182901.1"/>
</dbReference>
<dbReference type="SMR" id="P53944"/>
<dbReference type="BioGRID" id="35760">
    <property type="interactions" value="33"/>
</dbReference>
<dbReference type="DIP" id="DIP-6545N"/>
<dbReference type="FunCoup" id="P53944">
    <property type="interactions" value="102"/>
</dbReference>
<dbReference type="IntAct" id="P53944">
    <property type="interactions" value="6"/>
</dbReference>
<dbReference type="STRING" id="4932.YNL063W"/>
<dbReference type="PaxDb" id="4932-YNL063W"/>
<dbReference type="PeptideAtlas" id="P53944"/>
<dbReference type="EnsemblFungi" id="YNL063W_mRNA">
    <property type="protein sequence ID" value="YNL063W"/>
    <property type="gene ID" value="YNL063W"/>
</dbReference>
<dbReference type="GeneID" id="855662"/>
<dbReference type="KEGG" id="sce:YNL063W"/>
<dbReference type="AGR" id="SGD:S000005007"/>
<dbReference type="SGD" id="S000005007">
    <property type="gene designation" value="MTQ1"/>
</dbReference>
<dbReference type="VEuPathDB" id="FungiDB:YNL063W"/>
<dbReference type="eggNOG" id="KOG2904">
    <property type="taxonomic scope" value="Eukaryota"/>
</dbReference>
<dbReference type="GeneTree" id="ENSGT00390000014125"/>
<dbReference type="HOGENOM" id="CLU_018398_0_2_1"/>
<dbReference type="InParanoid" id="P53944"/>
<dbReference type="OMA" id="MPRIPYS"/>
<dbReference type="OrthoDB" id="269872at2759"/>
<dbReference type="BioCyc" id="YEAST:G3O-33093-MONOMER"/>
<dbReference type="BioGRID-ORCS" id="855662">
    <property type="hits" value="1 hit in 10 CRISPR screens"/>
</dbReference>
<dbReference type="PRO" id="PR:P53944"/>
<dbReference type="Proteomes" id="UP000002311">
    <property type="component" value="Chromosome XIV"/>
</dbReference>
<dbReference type="RNAct" id="P53944">
    <property type="molecule type" value="protein"/>
</dbReference>
<dbReference type="GO" id="GO:0005739">
    <property type="term" value="C:mitochondrion"/>
    <property type="evidence" value="ECO:0007005"/>
    <property type="project" value="SGD"/>
</dbReference>
<dbReference type="GO" id="GO:0102559">
    <property type="term" value="F:protein-(glutamine-N5) methyltransferase activity"/>
    <property type="evidence" value="ECO:0007669"/>
    <property type="project" value="UniProtKB-EC"/>
</dbReference>
<dbReference type="GO" id="GO:0036009">
    <property type="term" value="F:protein-glutamine N-methyltransferase activity"/>
    <property type="evidence" value="ECO:0000318"/>
    <property type="project" value="GO_Central"/>
</dbReference>
<dbReference type="GO" id="GO:0008757">
    <property type="term" value="F:S-adenosylmethionine-dependent methyltransferase activity"/>
    <property type="evidence" value="ECO:0000314"/>
    <property type="project" value="SGD"/>
</dbReference>
<dbReference type="GO" id="GO:0032259">
    <property type="term" value="P:methylation"/>
    <property type="evidence" value="ECO:0007669"/>
    <property type="project" value="UniProtKB-KW"/>
</dbReference>
<dbReference type="GO" id="GO:0006451">
    <property type="term" value="P:translational readthrough"/>
    <property type="evidence" value="ECO:0000316"/>
    <property type="project" value="SGD"/>
</dbReference>
<dbReference type="GO" id="GO:0006415">
    <property type="term" value="P:translational termination"/>
    <property type="evidence" value="ECO:0000318"/>
    <property type="project" value="GO_Central"/>
</dbReference>
<dbReference type="CDD" id="cd02440">
    <property type="entry name" value="AdoMet_MTases"/>
    <property type="match status" value="1"/>
</dbReference>
<dbReference type="Gene3D" id="3.40.50.150">
    <property type="entry name" value="Vaccinia Virus protein VP39"/>
    <property type="match status" value="1"/>
</dbReference>
<dbReference type="InterPro" id="IPR004556">
    <property type="entry name" value="HemK-like"/>
</dbReference>
<dbReference type="InterPro" id="IPR050320">
    <property type="entry name" value="N5-glutamine_MTase"/>
</dbReference>
<dbReference type="InterPro" id="IPR029063">
    <property type="entry name" value="SAM-dependent_MTases_sf"/>
</dbReference>
<dbReference type="InterPro" id="IPR007848">
    <property type="entry name" value="Small_mtfrase_dom"/>
</dbReference>
<dbReference type="NCBIfam" id="TIGR00536">
    <property type="entry name" value="hemK_fam"/>
    <property type="match status" value="1"/>
</dbReference>
<dbReference type="PANTHER" id="PTHR18895">
    <property type="entry name" value="HEMK METHYLTRANSFERASE"/>
    <property type="match status" value="1"/>
</dbReference>
<dbReference type="PANTHER" id="PTHR18895:SF74">
    <property type="entry name" value="MTRF1L RELEASE FACTOR GLUTAMINE METHYLTRANSFERASE"/>
    <property type="match status" value="1"/>
</dbReference>
<dbReference type="Pfam" id="PF05175">
    <property type="entry name" value="MTS"/>
    <property type="match status" value="1"/>
</dbReference>
<dbReference type="SUPFAM" id="SSF53335">
    <property type="entry name" value="S-adenosyl-L-methionine-dependent methyltransferases"/>
    <property type="match status" value="1"/>
</dbReference>
<feature type="chain" id="PRO_0000203448" description="Mitochondrial MRF1 N(5)-glutamine methyltransferase MTQ1">
    <location>
        <begin position="1"/>
        <end position="314"/>
    </location>
</feature>
<feature type="binding site" evidence="1">
    <location>
        <begin position="118"/>
        <end position="122"/>
    </location>
    <ligand>
        <name>S-adenosyl-L-methionine</name>
        <dbReference type="ChEBI" id="CHEBI:59789"/>
    </ligand>
</feature>
<feature type="binding site" evidence="1">
    <location>
        <position position="141"/>
    </location>
    <ligand>
        <name>S-adenosyl-L-methionine</name>
        <dbReference type="ChEBI" id="CHEBI:59789"/>
    </ligand>
</feature>
<feature type="binding site" evidence="1">
    <location>
        <begin position="188"/>
        <end position="191"/>
    </location>
    <ligand>
        <name>substrate</name>
    </ligand>
</feature>
<feature type="binding site" evidence="1">
    <location>
        <position position="188"/>
    </location>
    <ligand>
        <name>S-adenosyl-L-methionine</name>
        <dbReference type="ChEBI" id="CHEBI:59789"/>
    </ligand>
</feature>
<sequence>MPRISTSLIRKASRIRPGLHLLLPECRTLEQAKLEYKWLTEELPPDKSIRWACLQRYKHVPLQYILRSQPFGALDIVCKPGVLIPRWETEEWVMAIIRALNNSMLSRHTIPLHICDTFTGTGCIALALSHGIANCTFTAIDVSTRAIKLVKENMLKNKVSGGKLVQHNILSSKASDEYPSHIDILTGNPPYIRKRDFNRDVKTSVKLFEPRLALVGELECYINLVNYWLPKTDSFFYEIGDVEQFNYVERRIKEDSYLSRIWSIGLKYDSNGKARVVYGFKATPKGRILHQIFASFGTIRHLATALSGHKANCN</sequence>
<accession>P53944</accession>
<accession>D6W1B7</accession>